<dbReference type="EC" id="5.3.1.6" evidence="1"/>
<dbReference type="EMBL" id="CP001013">
    <property type="protein sequence ID" value="ACB33325.1"/>
    <property type="molecule type" value="Genomic_DNA"/>
</dbReference>
<dbReference type="RefSeq" id="WP_012346087.1">
    <property type="nucleotide sequence ID" value="NC_010524.1"/>
</dbReference>
<dbReference type="SMR" id="B1Y3C2"/>
<dbReference type="STRING" id="395495.Lcho_1056"/>
<dbReference type="KEGG" id="lch:Lcho_1056"/>
<dbReference type="eggNOG" id="COG0120">
    <property type="taxonomic scope" value="Bacteria"/>
</dbReference>
<dbReference type="HOGENOM" id="CLU_056590_1_1_4"/>
<dbReference type="OrthoDB" id="5870696at2"/>
<dbReference type="UniPathway" id="UPA00115">
    <property type="reaction ID" value="UER00412"/>
</dbReference>
<dbReference type="Proteomes" id="UP000001693">
    <property type="component" value="Chromosome"/>
</dbReference>
<dbReference type="GO" id="GO:0005829">
    <property type="term" value="C:cytosol"/>
    <property type="evidence" value="ECO:0007669"/>
    <property type="project" value="TreeGrafter"/>
</dbReference>
<dbReference type="GO" id="GO:0004751">
    <property type="term" value="F:ribose-5-phosphate isomerase activity"/>
    <property type="evidence" value="ECO:0007669"/>
    <property type="project" value="UniProtKB-UniRule"/>
</dbReference>
<dbReference type="GO" id="GO:0006014">
    <property type="term" value="P:D-ribose metabolic process"/>
    <property type="evidence" value="ECO:0007669"/>
    <property type="project" value="TreeGrafter"/>
</dbReference>
<dbReference type="GO" id="GO:0009052">
    <property type="term" value="P:pentose-phosphate shunt, non-oxidative branch"/>
    <property type="evidence" value="ECO:0007669"/>
    <property type="project" value="UniProtKB-UniRule"/>
</dbReference>
<dbReference type="CDD" id="cd01398">
    <property type="entry name" value="RPI_A"/>
    <property type="match status" value="1"/>
</dbReference>
<dbReference type="FunFam" id="3.40.50.1360:FF:000001">
    <property type="entry name" value="Ribose-5-phosphate isomerase A"/>
    <property type="match status" value="1"/>
</dbReference>
<dbReference type="Gene3D" id="3.30.70.260">
    <property type="match status" value="1"/>
</dbReference>
<dbReference type="Gene3D" id="3.40.50.1360">
    <property type="match status" value="1"/>
</dbReference>
<dbReference type="HAMAP" id="MF_00170">
    <property type="entry name" value="Rib_5P_isom_A"/>
    <property type="match status" value="1"/>
</dbReference>
<dbReference type="InterPro" id="IPR037171">
    <property type="entry name" value="NagB/RpiA_transferase-like"/>
</dbReference>
<dbReference type="InterPro" id="IPR020672">
    <property type="entry name" value="Ribose5P_isomerase_typA_subgr"/>
</dbReference>
<dbReference type="InterPro" id="IPR004788">
    <property type="entry name" value="Ribose5P_isomerase_type_A"/>
</dbReference>
<dbReference type="NCBIfam" id="NF001924">
    <property type="entry name" value="PRK00702.1"/>
    <property type="match status" value="1"/>
</dbReference>
<dbReference type="NCBIfam" id="TIGR00021">
    <property type="entry name" value="rpiA"/>
    <property type="match status" value="1"/>
</dbReference>
<dbReference type="PANTHER" id="PTHR11934">
    <property type="entry name" value="RIBOSE-5-PHOSPHATE ISOMERASE"/>
    <property type="match status" value="1"/>
</dbReference>
<dbReference type="PANTHER" id="PTHR11934:SF0">
    <property type="entry name" value="RIBOSE-5-PHOSPHATE ISOMERASE"/>
    <property type="match status" value="1"/>
</dbReference>
<dbReference type="Pfam" id="PF06026">
    <property type="entry name" value="Rib_5-P_isom_A"/>
    <property type="match status" value="1"/>
</dbReference>
<dbReference type="SUPFAM" id="SSF75445">
    <property type="entry name" value="D-ribose-5-phosphate isomerase (RpiA), lid domain"/>
    <property type="match status" value="1"/>
</dbReference>
<dbReference type="SUPFAM" id="SSF100950">
    <property type="entry name" value="NagB/RpiA/CoA transferase-like"/>
    <property type="match status" value="1"/>
</dbReference>
<feature type="chain" id="PRO_1000097672" description="Ribose-5-phosphate isomerase A">
    <location>
        <begin position="1"/>
        <end position="220"/>
    </location>
</feature>
<feature type="active site" description="Proton acceptor" evidence="1">
    <location>
        <position position="103"/>
    </location>
</feature>
<feature type="binding site" evidence="1">
    <location>
        <begin position="28"/>
        <end position="31"/>
    </location>
    <ligand>
        <name>substrate</name>
    </ligand>
</feature>
<feature type="binding site" evidence="1">
    <location>
        <begin position="81"/>
        <end position="84"/>
    </location>
    <ligand>
        <name>substrate</name>
    </ligand>
</feature>
<feature type="binding site" evidence="1">
    <location>
        <begin position="94"/>
        <end position="97"/>
    </location>
    <ligand>
        <name>substrate</name>
    </ligand>
</feature>
<feature type="binding site" evidence="1">
    <location>
        <position position="121"/>
    </location>
    <ligand>
        <name>substrate</name>
    </ligand>
</feature>
<accession>B1Y3C2</accession>
<organism>
    <name type="scientific">Leptothrix cholodnii (strain ATCC 51168 / LMG 8142 / SP-6)</name>
    <name type="common">Leptothrix discophora (strain SP-6)</name>
    <dbReference type="NCBI Taxonomy" id="395495"/>
    <lineage>
        <taxon>Bacteria</taxon>
        <taxon>Pseudomonadati</taxon>
        <taxon>Pseudomonadota</taxon>
        <taxon>Betaproteobacteria</taxon>
        <taxon>Burkholderiales</taxon>
        <taxon>Sphaerotilaceae</taxon>
        <taxon>Leptothrix</taxon>
    </lineage>
</organism>
<sequence length="220" mass="23088">MTQDELKALVGQAAVAYVPDGSVVGVGTGSTVNCFIDALAAIKDRIAGAVSSSVRSTERLQALGIPVLDLSQVERIPVYIDGADEIDPRGHMIKGGGAALTREKIVADLAERFVCIADASKRVDVMGRFPLPVEVIPMAAAQVARRFGAAYGGLARVREGVVTDNGNLILDVTGLHIADPLAMETEVNQWPGVVCVGIFARHKAAVCLLGTPEGVRTLNF</sequence>
<gene>
    <name evidence="1" type="primary">rpiA</name>
    <name type="ordered locus">Lcho_1056</name>
</gene>
<proteinExistence type="inferred from homology"/>
<name>RPIA_LEPCP</name>
<keyword id="KW-0413">Isomerase</keyword>
<keyword id="KW-1185">Reference proteome</keyword>
<protein>
    <recommendedName>
        <fullName evidence="1">Ribose-5-phosphate isomerase A</fullName>
        <ecNumber evidence="1">5.3.1.6</ecNumber>
    </recommendedName>
    <alternativeName>
        <fullName evidence="1">Phosphoriboisomerase A</fullName>
        <shortName evidence="1">PRI</shortName>
    </alternativeName>
</protein>
<reference key="1">
    <citation type="submission" date="2008-03" db="EMBL/GenBank/DDBJ databases">
        <title>Complete sequence of Leptothrix cholodnii SP-6.</title>
        <authorList>
            <consortium name="US DOE Joint Genome Institute"/>
            <person name="Copeland A."/>
            <person name="Lucas S."/>
            <person name="Lapidus A."/>
            <person name="Glavina del Rio T."/>
            <person name="Dalin E."/>
            <person name="Tice H."/>
            <person name="Bruce D."/>
            <person name="Goodwin L."/>
            <person name="Pitluck S."/>
            <person name="Chertkov O."/>
            <person name="Brettin T."/>
            <person name="Detter J.C."/>
            <person name="Han C."/>
            <person name="Kuske C.R."/>
            <person name="Schmutz J."/>
            <person name="Larimer F."/>
            <person name="Land M."/>
            <person name="Hauser L."/>
            <person name="Kyrpides N."/>
            <person name="Lykidis A."/>
            <person name="Emerson D."/>
            <person name="Richardson P."/>
        </authorList>
    </citation>
    <scope>NUCLEOTIDE SEQUENCE [LARGE SCALE GENOMIC DNA]</scope>
    <source>
        <strain>ATCC 51168 / LMG 8142 / SP-6</strain>
    </source>
</reference>
<evidence type="ECO:0000255" key="1">
    <source>
        <dbReference type="HAMAP-Rule" id="MF_00170"/>
    </source>
</evidence>
<comment type="function">
    <text evidence="1">Catalyzes the reversible conversion of ribose-5-phosphate to ribulose 5-phosphate.</text>
</comment>
<comment type="catalytic activity">
    <reaction evidence="1">
        <text>aldehydo-D-ribose 5-phosphate = D-ribulose 5-phosphate</text>
        <dbReference type="Rhea" id="RHEA:14657"/>
        <dbReference type="ChEBI" id="CHEBI:58121"/>
        <dbReference type="ChEBI" id="CHEBI:58273"/>
        <dbReference type="EC" id="5.3.1.6"/>
    </reaction>
</comment>
<comment type="pathway">
    <text evidence="1">Carbohydrate degradation; pentose phosphate pathway; D-ribose 5-phosphate from D-ribulose 5-phosphate (non-oxidative stage): step 1/1.</text>
</comment>
<comment type="subunit">
    <text evidence="1">Homodimer.</text>
</comment>
<comment type="similarity">
    <text evidence="1">Belongs to the ribose 5-phosphate isomerase family.</text>
</comment>